<name>RFT1_CAEEL</name>
<proteinExistence type="inferred from homology"/>
<accession>Q23444</accession>
<accession>Q86DD6</accession>
<accession>U4PBU5</accession>
<dbReference type="EMBL" id="BX284604">
    <property type="protein sequence ID" value="CCD73072.1"/>
    <property type="molecule type" value="Genomic_DNA"/>
</dbReference>
<dbReference type="EMBL" id="BX284604">
    <property type="protein sequence ID" value="CCD73073.2"/>
    <property type="molecule type" value="Genomic_DNA"/>
</dbReference>
<dbReference type="EMBL" id="BX284604">
    <property type="protein sequence ID" value="CDH93204.1"/>
    <property type="molecule type" value="Genomic_DNA"/>
</dbReference>
<dbReference type="PIR" id="T29705">
    <property type="entry name" value="T29705"/>
</dbReference>
<dbReference type="RefSeq" id="NP_001023610.1">
    <molecule id="Q23444-1"/>
    <property type="nucleotide sequence ID" value="NM_001028439.7"/>
</dbReference>
<dbReference type="RefSeq" id="NP_001023611.2">
    <property type="nucleotide sequence ID" value="NM_001028440.4"/>
</dbReference>
<dbReference type="RefSeq" id="NP_001294434.1">
    <property type="nucleotide sequence ID" value="NM_001307505.1"/>
</dbReference>
<dbReference type="RefSeq" id="NP_001367982.1">
    <molecule id="Q23444-2"/>
    <property type="nucleotide sequence ID" value="NM_001380194.1"/>
</dbReference>
<dbReference type="RefSeq" id="NP_001368266.1">
    <molecule id="Q23444-3"/>
    <property type="nucleotide sequence ID" value="NM_001380195.1"/>
</dbReference>
<dbReference type="FunCoup" id="Q23444">
    <property type="interactions" value="3136"/>
</dbReference>
<dbReference type="STRING" id="6239.ZK180.3a.1"/>
<dbReference type="PaxDb" id="6239-ZK180.3a"/>
<dbReference type="PeptideAtlas" id="Q23444"/>
<dbReference type="EnsemblMetazoa" id="ZK180.3a.1">
    <molecule id="Q23444-1"/>
    <property type="protein sequence ID" value="ZK180.3a.1"/>
    <property type="gene ID" value="WBGene00022677"/>
</dbReference>
<dbReference type="EnsemblMetazoa" id="ZK180.3b.1">
    <molecule id="Q23444-2"/>
    <property type="protein sequence ID" value="ZK180.3b.1"/>
    <property type="gene ID" value="WBGene00022677"/>
</dbReference>
<dbReference type="EnsemblMetazoa" id="ZK180.3c.1">
    <molecule id="Q23444-3"/>
    <property type="protein sequence ID" value="ZK180.3c.1"/>
    <property type="gene ID" value="WBGene00022677"/>
</dbReference>
<dbReference type="GeneID" id="177216"/>
<dbReference type="KEGG" id="cel:CELE_ZK180.3"/>
<dbReference type="UCSC" id="ZK180.3a">
    <molecule id="Q23444-1"/>
    <property type="organism name" value="c. elegans"/>
</dbReference>
<dbReference type="AGR" id="WB:WBGene00022677"/>
<dbReference type="CTD" id="177216"/>
<dbReference type="WormBase" id="ZK180.3a">
    <molecule id="Q23444-1"/>
    <property type="protein sequence ID" value="CE07621"/>
    <property type="gene ID" value="WBGene00022677"/>
    <property type="gene designation" value="rfth-1"/>
</dbReference>
<dbReference type="WormBase" id="ZK180.3b">
    <molecule id="Q23444-2"/>
    <property type="protein sequence ID" value="CE48802"/>
    <property type="gene ID" value="WBGene00022677"/>
    <property type="gene designation" value="rfth-1"/>
</dbReference>
<dbReference type="WormBase" id="ZK180.3c">
    <molecule id="Q23444-3"/>
    <property type="protein sequence ID" value="CE48641"/>
    <property type="gene ID" value="WBGene00022677"/>
    <property type="gene designation" value="rfth-1"/>
</dbReference>
<dbReference type="eggNOG" id="KOG2864">
    <property type="taxonomic scope" value="Eukaryota"/>
</dbReference>
<dbReference type="GeneTree" id="ENSGT00390000011390"/>
<dbReference type="HOGENOM" id="CLU_023360_5_0_1"/>
<dbReference type="InParanoid" id="Q23444"/>
<dbReference type="OMA" id="WPGKLFG"/>
<dbReference type="OrthoDB" id="9979195at2759"/>
<dbReference type="PhylomeDB" id="Q23444"/>
<dbReference type="UniPathway" id="UPA00378"/>
<dbReference type="PRO" id="PR:Q23444"/>
<dbReference type="Proteomes" id="UP000001940">
    <property type="component" value="Chromosome IV"/>
</dbReference>
<dbReference type="Bgee" id="WBGene00022677">
    <property type="expression patterns" value="Expressed in pharyngeal muscle cell (C elegans) and 4 other cell types or tissues"/>
</dbReference>
<dbReference type="GO" id="GO:0005789">
    <property type="term" value="C:endoplasmic reticulum membrane"/>
    <property type="evidence" value="ECO:0000318"/>
    <property type="project" value="GO_Central"/>
</dbReference>
<dbReference type="GO" id="GO:0006488">
    <property type="term" value="P:dolichol-linked oligosaccharide biosynthetic process"/>
    <property type="evidence" value="ECO:0000250"/>
    <property type="project" value="UniProtKB"/>
</dbReference>
<dbReference type="GO" id="GO:0034203">
    <property type="term" value="P:glycolipid translocation"/>
    <property type="evidence" value="ECO:0000250"/>
    <property type="project" value="UniProtKB"/>
</dbReference>
<dbReference type="GO" id="GO:0006487">
    <property type="term" value="P:protein N-linked glycosylation"/>
    <property type="evidence" value="ECO:0000250"/>
    <property type="project" value="UniProtKB"/>
</dbReference>
<dbReference type="InterPro" id="IPR007594">
    <property type="entry name" value="RFT1"/>
</dbReference>
<dbReference type="PANTHER" id="PTHR13117">
    <property type="entry name" value="ENDOPLASMIC RETICULUM MULTISPAN TRANSMEMBRANE PROTEIN-RELATED"/>
    <property type="match status" value="1"/>
</dbReference>
<dbReference type="PANTHER" id="PTHR13117:SF5">
    <property type="entry name" value="PROTEIN RFT1 HOMOLOG"/>
    <property type="match status" value="1"/>
</dbReference>
<dbReference type="Pfam" id="PF04506">
    <property type="entry name" value="Rft-1"/>
    <property type="match status" value="1"/>
</dbReference>
<gene>
    <name evidence="5" type="primary">rfth-1</name>
    <name evidence="5" type="ORF">ZK180.3</name>
</gene>
<organism>
    <name type="scientific">Caenorhabditis elegans</name>
    <dbReference type="NCBI Taxonomy" id="6239"/>
    <lineage>
        <taxon>Eukaryota</taxon>
        <taxon>Metazoa</taxon>
        <taxon>Ecdysozoa</taxon>
        <taxon>Nematoda</taxon>
        <taxon>Chromadorea</taxon>
        <taxon>Rhabditida</taxon>
        <taxon>Rhabditina</taxon>
        <taxon>Rhabditomorpha</taxon>
        <taxon>Rhabditoidea</taxon>
        <taxon>Rhabditidae</taxon>
        <taxon>Peloderinae</taxon>
        <taxon>Caenorhabditis</taxon>
    </lineage>
</organism>
<protein>
    <recommendedName>
        <fullName evidence="2">Man(5)GlcNAc(2)-PP-dolichol translocation protein RFT1</fullName>
    </recommendedName>
    <alternativeName>
        <fullName evidence="2">Protein RFT1 homolog</fullName>
    </alternativeName>
</protein>
<reference key="1">
    <citation type="journal article" date="1998" name="Science">
        <title>Genome sequence of the nematode C. elegans: a platform for investigating biology.</title>
        <authorList>
            <consortium name="The C. elegans sequencing consortium"/>
        </authorList>
    </citation>
    <scope>NUCLEOTIDE SEQUENCE [LARGE SCALE GENOMIC DNA]</scope>
    <source>
        <strain>Bristol N2</strain>
    </source>
</reference>
<comment type="function">
    <text evidence="1 2">Intramembrane glycolipid transporter that operates in the biosynthetic pathway of dolichol-linked oligosaccharides, the glycan precursors employed in protein asparagine (N)-glycosylation. The sequential addition of sugars to dolichol pyrophosphate produces dolichol-linked oligosaccharides containing fourteen sugars, including two GlcNAcs, nine mannoses and three glucoses. Once assembled, the oligosaccharide is transferred from the lipid to nascent proteins by oligosaccharyltransferases. The assembly of dolichol-linked oligosaccharides begins on the cytosolic side of the endoplasmic reticulum membrane and finishes in its lumen. RFT1 could mediate the translocation of the cytosolically oriented intermediate DolPP-GlcNAc2Man5, produced by ALG11, into the ER lumen where dolichol-linked oligosaccharides assembly continues (By similarity). However, the intramembrane lipid transporter activity could not be confirmed in vitro (By similarity).</text>
</comment>
<comment type="pathway">
    <text evidence="2">Protein modification; protein glycosylation.</text>
</comment>
<comment type="subcellular location">
    <subcellularLocation>
        <location evidence="1">Endoplasmic reticulum membrane</location>
        <topology evidence="3">Multi-pass membrane protein</topology>
    </subcellularLocation>
</comment>
<comment type="alternative products">
    <event type="alternative splicing"/>
    <isoform>
        <id>Q23444-1</id>
        <name evidence="5">a</name>
        <sequence type="displayed"/>
    </isoform>
    <isoform>
        <id>Q23444-2</id>
        <name evidence="6">b</name>
        <sequence type="described" ref="VSP_029511"/>
    </isoform>
    <isoform>
        <id>Q23444-3</id>
        <name evidence="7">c</name>
        <sequence type="described" ref="VSP_053991"/>
    </isoform>
</comment>
<comment type="similarity">
    <text evidence="4">Belongs to the RFT1 family.</text>
</comment>
<sequence>MSLFSSLVHNVRGQLIARIISFAINMYLLRRINNDVLGLVNVRLTLLYSSILFLTREPLRKAEIIRGSLPKFINLLWLSPIISTVISVVCVYLWYAFSSTSDEVSWSVLLSFPISAIIESIAEPFSVISLRLESKCGSLAQHFAIGQGMLICVKRIFVLAGLFMFPGMYHLELFAYAQYIGAIAYLLFNFVAFYIYIRNKSIPELEQFSTFSDLFPKFSEGIDRDSIHAVFTMFSHSILKQLLTDGSAYVMTFTELLSLKDQAVYDAVERVGSIIVRTILSPIDENCNAYFSNTIRKESSVFNKNTDNHDDLVDTLSKVLHVVGVIGFVACTFGIPYSPVVISLYGGKLLSENGGALLLSLYSGYILVTAINGITEGFAMASMDNRQIFTHGKFLFVTSIIHLIINYVLCVYMNSAGFIVANIINMSVRIIYNWRTIREYLGDKCPSFTEVLPTGQTSIFLGVSLLATSFTYLLFATTPGLSYTLAHIAIGAVCLILTAQDTAQHDSVFTVIVDSLAKKHRD</sequence>
<feature type="chain" id="PRO_0000311289" description="Man(5)GlcNAc(2)-PP-dolichol translocation protein RFT1">
    <location>
        <begin position="1"/>
        <end position="522"/>
    </location>
</feature>
<feature type="transmembrane region" description="Helical" evidence="3">
    <location>
        <begin position="35"/>
        <end position="55"/>
    </location>
</feature>
<feature type="transmembrane region" description="Helical" evidence="3">
    <location>
        <begin position="75"/>
        <end position="95"/>
    </location>
</feature>
<feature type="transmembrane region" description="Helical" evidence="3">
    <location>
        <begin position="108"/>
        <end position="128"/>
    </location>
</feature>
<feature type="transmembrane region" description="Helical" evidence="3">
    <location>
        <begin position="143"/>
        <end position="165"/>
    </location>
</feature>
<feature type="transmembrane region" description="Helical" evidence="3">
    <location>
        <begin position="177"/>
        <end position="197"/>
    </location>
</feature>
<feature type="transmembrane region" description="Helical" evidence="3">
    <location>
        <begin position="322"/>
        <end position="342"/>
    </location>
</feature>
<feature type="transmembrane region" description="Helical" evidence="3">
    <location>
        <begin position="354"/>
        <end position="374"/>
    </location>
</feature>
<feature type="transmembrane region" description="Helical" evidence="3">
    <location>
        <begin position="400"/>
        <end position="420"/>
    </location>
</feature>
<feature type="transmembrane region" description="Helical" evidence="3">
    <location>
        <begin position="457"/>
        <end position="477"/>
    </location>
</feature>
<feature type="transmembrane region" description="Helical" evidence="3">
    <location>
        <begin position="479"/>
        <end position="499"/>
    </location>
</feature>
<feature type="splice variant" id="VSP_053991" description="In isoform c." evidence="4">
    <location>
        <begin position="1"/>
        <end position="379"/>
    </location>
</feature>
<feature type="splice variant" id="VSP_029511" description="In isoform b." evidence="4">
    <location>
        <begin position="1"/>
        <end position="148"/>
    </location>
</feature>
<keyword id="KW-0025">Alternative splicing</keyword>
<keyword id="KW-0256">Endoplasmic reticulum</keyword>
<keyword id="KW-0472">Membrane</keyword>
<keyword id="KW-1185">Reference proteome</keyword>
<keyword id="KW-0812">Transmembrane</keyword>
<keyword id="KW-1133">Transmembrane helix</keyword>
<evidence type="ECO:0000250" key="1">
    <source>
        <dbReference type="UniProtKB" id="P38206"/>
    </source>
</evidence>
<evidence type="ECO:0000250" key="2">
    <source>
        <dbReference type="UniProtKB" id="Q96AA3"/>
    </source>
</evidence>
<evidence type="ECO:0000255" key="3"/>
<evidence type="ECO:0000305" key="4"/>
<evidence type="ECO:0000312" key="5">
    <source>
        <dbReference type="WormBase" id="ZK180.3a"/>
    </source>
</evidence>
<evidence type="ECO:0000312" key="6">
    <source>
        <dbReference type="WormBase" id="ZK180.3b"/>
    </source>
</evidence>
<evidence type="ECO:0000312" key="7">
    <source>
        <dbReference type="WormBase" id="ZK180.3c"/>
    </source>
</evidence>